<accession>P63745</accession>
<accession>A0A1R3XZC5</accession>
<accession>O53947</accession>
<accession>X2BJ83</accession>
<dbReference type="EMBL" id="LT708304">
    <property type="protein sequence ID" value="SIU00430.1"/>
    <property type="molecule type" value="Genomic_DNA"/>
</dbReference>
<dbReference type="RefSeq" id="NP_855479.1">
    <property type="nucleotide sequence ID" value="NC_002945.3"/>
</dbReference>
<dbReference type="RefSeq" id="WP_003408868.1">
    <property type="nucleotide sequence ID" value="NC_002945.4"/>
</dbReference>
<dbReference type="SMR" id="P63745"/>
<dbReference type="GeneID" id="45425775"/>
<dbReference type="KEGG" id="mbo:BQ2027_MB1826"/>
<dbReference type="PATRIC" id="fig|233413.5.peg.2006"/>
<dbReference type="Proteomes" id="UP000001419">
    <property type="component" value="Chromosome"/>
</dbReference>
<dbReference type="GO" id="GO:0005737">
    <property type="term" value="C:cytoplasm"/>
    <property type="evidence" value="ECO:0007669"/>
    <property type="project" value="UniProtKB-SubCell"/>
</dbReference>
<dbReference type="GO" id="GO:0005524">
    <property type="term" value="F:ATP binding"/>
    <property type="evidence" value="ECO:0007669"/>
    <property type="project" value="UniProtKB-KW"/>
</dbReference>
<dbReference type="GO" id="GO:0016887">
    <property type="term" value="F:ATP hydrolysis activity"/>
    <property type="evidence" value="ECO:0007669"/>
    <property type="project" value="InterPro"/>
</dbReference>
<dbReference type="FunFam" id="1.10.8.60:FF:000168">
    <property type="entry name" value="ESX-5 type VII secretion system protein EccA"/>
    <property type="match status" value="1"/>
</dbReference>
<dbReference type="FunFam" id="1.25.40.10:FF:000424">
    <property type="entry name" value="Type VII secretion AAA-ATPase EccA"/>
    <property type="match status" value="1"/>
</dbReference>
<dbReference type="FunFam" id="3.40.50.300:FF:001169">
    <property type="entry name" value="Type VII secretion AAA-ATPase EccA"/>
    <property type="match status" value="1"/>
</dbReference>
<dbReference type="Gene3D" id="1.10.8.60">
    <property type="match status" value="1"/>
</dbReference>
<dbReference type="Gene3D" id="3.40.50.300">
    <property type="entry name" value="P-loop containing nucleotide triphosphate hydrolases"/>
    <property type="match status" value="1"/>
</dbReference>
<dbReference type="Gene3D" id="1.25.40.10">
    <property type="entry name" value="Tetratricopeptide repeat domain"/>
    <property type="match status" value="1"/>
</dbReference>
<dbReference type="InterPro" id="IPR003593">
    <property type="entry name" value="AAA+_ATPase"/>
</dbReference>
<dbReference type="InterPro" id="IPR003959">
    <property type="entry name" value="ATPase_AAA_core"/>
</dbReference>
<dbReference type="InterPro" id="IPR000641">
    <property type="entry name" value="CbxX/CfxQ"/>
</dbReference>
<dbReference type="InterPro" id="IPR050773">
    <property type="entry name" value="CbxX/CfxQ_RuBisCO_ESX"/>
</dbReference>
<dbReference type="InterPro" id="IPR027417">
    <property type="entry name" value="P-loop_NTPase"/>
</dbReference>
<dbReference type="InterPro" id="IPR023835">
    <property type="entry name" value="T7SS_EccA"/>
</dbReference>
<dbReference type="InterPro" id="IPR049078">
    <property type="entry name" value="T7SS_EccA1-like_N"/>
</dbReference>
<dbReference type="InterPro" id="IPR011990">
    <property type="entry name" value="TPR-like_helical_dom_sf"/>
</dbReference>
<dbReference type="NCBIfam" id="TIGR03922">
    <property type="entry name" value="T7SS_EccA"/>
    <property type="match status" value="1"/>
</dbReference>
<dbReference type="PANTHER" id="PTHR43392">
    <property type="entry name" value="AAA-TYPE ATPASE FAMILY PROTEIN / ANKYRIN REPEAT FAMILY PROTEIN"/>
    <property type="match status" value="1"/>
</dbReference>
<dbReference type="PANTHER" id="PTHR43392:SF2">
    <property type="entry name" value="AAA-TYPE ATPASE FAMILY PROTEIN _ ANKYRIN REPEAT FAMILY PROTEIN"/>
    <property type="match status" value="1"/>
</dbReference>
<dbReference type="Pfam" id="PF00004">
    <property type="entry name" value="AAA"/>
    <property type="match status" value="1"/>
</dbReference>
<dbReference type="Pfam" id="PF21545">
    <property type="entry name" value="T7SS_EccA1_N"/>
    <property type="match status" value="1"/>
</dbReference>
<dbReference type="PRINTS" id="PR00819">
    <property type="entry name" value="CBXCFQXSUPER"/>
</dbReference>
<dbReference type="SMART" id="SM00382">
    <property type="entry name" value="AAA"/>
    <property type="match status" value="1"/>
</dbReference>
<dbReference type="SUPFAM" id="SSF52540">
    <property type="entry name" value="P-loop containing nucleoside triphosphate hydrolases"/>
    <property type="match status" value="1"/>
</dbReference>
<dbReference type="SUPFAM" id="SSF48452">
    <property type="entry name" value="TPR-like"/>
    <property type="match status" value="1"/>
</dbReference>
<keyword id="KW-0067">ATP-binding</keyword>
<keyword id="KW-0963">Cytoplasm</keyword>
<keyword id="KW-0547">Nucleotide-binding</keyword>
<keyword id="KW-1185">Reference proteome</keyword>
<comment type="function">
    <text evidence="2">Part of an ESX-5 / type VII specialized secretion system (T7SS), which exports several proteins. EccA5 exhibits ATPase activity and may provide energy for the export of ESX-5 substrates (By similarity).</text>
</comment>
<comment type="subunit">
    <text evidence="3">Part of the ESX-5 / type VII secretion system (T7SS), which is composed of cytosolic and membrane components (By similarity).</text>
</comment>
<comment type="subcellular location">
    <subcellularLocation>
        <location evidence="1">Cytoplasm</location>
    </subcellularLocation>
</comment>
<comment type="similarity">
    <text evidence="5">Belongs to the CbxX/CfxQ family.</text>
</comment>
<name>ECCA5_MYCBO</name>
<evidence type="ECO:0000250" key="1">
    <source>
        <dbReference type="UniProtKB" id="B2HSU9"/>
    </source>
</evidence>
<evidence type="ECO:0000250" key="2">
    <source>
        <dbReference type="UniProtKB" id="P9WPH9"/>
    </source>
</evidence>
<evidence type="ECO:0000250" key="3">
    <source>
        <dbReference type="UniProtKB" id="P9WPI1"/>
    </source>
</evidence>
<evidence type="ECO:0000255" key="4"/>
<evidence type="ECO:0000305" key="5"/>
<proteinExistence type="inferred from homology"/>
<gene>
    <name evidence="3" type="primary">eccA5</name>
    <name type="ordered locus">BQ2027_MB1826</name>
</gene>
<organism>
    <name type="scientific">Mycobacterium bovis (strain ATCC BAA-935 / AF2122/97)</name>
    <dbReference type="NCBI Taxonomy" id="233413"/>
    <lineage>
        <taxon>Bacteria</taxon>
        <taxon>Bacillati</taxon>
        <taxon>Actinomycetota</taxon>
        <taxon>Actinomycetes</taxon>
        <taxon>Mycobacteriales</taxon>
        <taxon>Mycobacteriaceae</taxon>
        <taxon>Mycobacterium</taxon>
        <taxon>Mycobacterium tuberculosis complex</taxon>
    </lineage>
</organism>
<feature type="chain" id="PRO_0000063047" description="ESX-5 secretion system protein EccA5">
    <location>
        <begin position="1"/>
        <end position="610"/>
    </location>
</feature>
<feature type="binding site" evidence="4">
    <location>
        <begin position="357"/>
        <end position="364"/>
    </location>
    <ligand>
        <name>ATP</name>
        <dbReference type="ChEBI" id="CHEBI:30616"/>
    </ligand>
</feature>
<protein>
    <recommendedName>
        <fullName evidence="5">ESX-5 secretion system protein EccA5</fullName>
    </recommendedName>
    <alternativeName>
        <fullName>ESX conserved component A5</fullName>
    </alternativeName>
    <alternativeName>
        <fullName evidence="5">Type VII secretion system protein EccA5</fullName>
        <shortName evidence="5">T7SS protein EccA5</shortName>
    </alternativeName>
</protein>
<sequence>MTRPQAAAEDARNAMVAGLLASGISVNGLQPSHNPQVAAQMFTTATRLDPKMCDAWLARLLAGDQSIEVLAGAWAAVRTFGWETRRLGVTDLQFRPEVSDGLFLRLAITSVDSLACAYAAVLAEAKRYQEAAELLDATDPRHPFDAELVSYVRGVLYFRTKRWPDVLAQFPEATQWRHPELKAAGAAMATTALASLGVFEEAFRRAQEAIEGDRVPGAANIALYTQGMCLRHVGREEEAVELLRRVYSRDAKFTPAREALDNPNFRLILTDPETIEARTDPWDPDSAPTRAQTEAARHAEMAAKYLAEGDAELNAMLGMEQAKKEIKLIKSTTKVNLARAKMGLPVPVTSRHTLLLGPPGTGKTSVARAFTKQLCGLTVLRKPLVVETSRTKLLGRYMADAEKNTEEMLEGALGGAVFFDEMHTLHEKGYSQGDPYGNAIINTLLLYMENHRDELVVFGAGYAKAMEKMLEVNQGLRRRFSTVIEFFSYTPQELIALTQLMGRENEDVITEEESQVLLPSYTKFYMEQSYSEDGDLIRGIDLLGNAGFVRNVVEKARDHRSFRLDDEDLDAVLASDLTEFSEDQLRRFKELTREDLAEGLRAAVAEKKTK</sequence>
<reference key="1">
    <citation type="journal article" date="2003" name="Proc. Natl. Acad. Sci. U.S.A.">
        <title>The complete genome sequence of Mycobacterium bovis.</title>
        <authorList>
            <person name="Garnier T."/>
            <person name="Eiglmeier K."/>
            <person name="Camus J.-C."/>
            <person name="Medina N."/>
            <person name="Mansoor H."/>
            <person name="Pryor M."/>
            <person name="Duthoy S."/>
            <person name="Grondin S."/>
            <person name="Lacroix C."/>
            <person name="Monsempe C."/>
            <person name="Simon S."/>
            <person name="Harris B."/>
            <person name="Atkin R."/>
            <person name="Doggett J."/>
            <person name="Mayes R."/>
            <person name="Keating L."/>
            <person name="Wheeler P.R."/>
            <person name="Parkhill J."/>
            <person name="Barrell B.G."/>
            <person name="Cole S.T."/>
            <person name="Gordon S.V."/>
            <person name="Hewinson R.G."/>
        </authorList>
    </citation>
    <scope>NUCLEOTIDE SEQUENCE [LARGE SCALE GENOMIC DNA]</scope>
    <source>
        <strain>ATCC BAA-935 / AF2122/97</strain>
    </source>
</reference>
<reference key="2">
    <citation type="journal article" date="2017" name="Genome Announc.">
        <title>Updated reference genome sequence and annotation of Mycobacterium bovis AF2122/97.</title>
        <authorList>
            <person name="Malone K.M."/>
            <person name="Farrell D."/>
            <person name="Stuber T.P."/>
            <person name="Schubert O.T."/>
            <person name="Aebersold R."/>
            <person name="Robbe-Austerman S."/>
            <person name="Gordon S.V."/>
        </authorList>
    </citation>
    <scope>NUCLEOTIDE SEQUENCE [LARGE SCALE GENOMIC DNA]</scope>
    <scope>GENOME REANNOTATION</scope>
    <source>
        <strain>ATCC BAA-935 / AF2122/97</strain>
    </source>
</reference>